<feature type="chain" id="PRO_1000206119" description="Transcriptional repressor NrdR">
    <location>
        <begin position="1"/>
        <end position="153"/>
    </location>
</feature>
<feature type="domain" description="ATP-cone" evidence="1">
    <location>
        <begin position="49"/>
        <end position="139"/>
    </location>
</feature>
<feature type="zinc finger region" evidence="1">
    <location>
        <begin position="3"/>
        <end position="34"/>
    </location>
</feature>
<protein>
    <recommendedName>
        <fullName evidence="1">Transcriptional repressor NrdR</fullName>
    </recommendedName>
</protein>
<reference key="1">
    <citation type="submission" date="2009-06" db="EMBL/GenBank/DDBJ databases">
        <title>Complete sequence of chromosome of Geopacillus sp. WCH70.</title>
        <authorList>
            <consortium name="US DOE Joint Genome Institute"/>
            <person name="Lucas S."/>
            <person name="Copeland A."/>
            <person name="Lapidus A."/>
            <person name="Glavina del Rio T."/>
            <person name="Dalin E."/>
            <person name="Tice H."/>
            <person name="Bruce D."/>
            <person name="Goodwin L."/>
            <person name="Pitluck S."/>
            <person name="Chertkov O."/>
            <person name="Brettin T."/>
            <person name="Detter J.C."/>
            <person name="Han C."/>
            <person name="Larimer F."/>
            <person name="Land M."/>
            <person name="Hauser L."/>
            <person name="Kyrpides N."/>
            <person name="Mikhailova N."/>
            <person name="Brumm P."/>
            <person name="Mead D.A."/>
            <person name="Richardson P."/>
        </authorList>
    </citation>
    <scope>NUCLEOTIDE SEQUENCE [LARGE SCALE GENOMIC DNA]</scope>
    <source>
        <strain>WCH70</strain>
    </source>
</reference>
<organism>
    <name type="scientific">Geobacillus sp. (strain WCH70)</name>
    <dbReference type="NCBI Taxonomy" id="471223"/>
    <lineage>
        <taxon>Bacteria</taxon>
        <taxon>Bacillati</taxon>
        <taxon>Bacillota</taxon>
        <taxon>Bacilli</taxon>
        <taxon>Bacillales</taxon>
        <taxon>Anoxybacillaceae</taxon>
        <taxon>Geobacillus</taxon>
    </lineage>
</organism>
<proteinExistence type="inferred from homology"/>
<sequence>MRCPSCQHHGTRVLDSRPVDEGRSIRRRRECEQCHYRFTTFEKVEEMPLIVVKKQGMREEFSRDKILRGLIKACEKRPVALEELEKITQDIERELRNQGVAEVKSETIGEMVMERLSKVDEVAYVRFASVYRQFKDLNVFIEELKELIKKEQR</sequence>
<comment type="function">
    <text evidence="1">Negatively regulates transcription of bacterial ribonucleotide reductase nrd genes and operons by binding to NrdR-boxes.</text>
</comment>
<comment type="cofactor">
    <cofactor evidence="1">
        <name>Zn(2+)</name>
        <dbReference type="ChEBI" id="CHEBI:29105"/>
    </cofactor>
    <text evidence="1">Binds 1 zinc ion.</text>
</comment>
<comment type="similarity">
    <text evidence="1">Belongs to the NrdR family.</text>
</comment>
<dbReference type="EMBL" id="CP001638">
    <property type="protein sequence ID" value="ACS25359.1"/>
    <property type="molecule type" value="Genomic_DNA"/>
</dbReference>
<dbReference type="SMR" id="C5D643"/>
<dbReference type="STRING" id="471223.GWCH70_2665"/>
<dbReference type="KEGG" id="gwc:GWCH70_2665"/>
<dbReference type="eggNOG" id="COG1327">
    <property type="taxonomic scope" value="Bacteria"/>
</dbReference>
<dbReference type="HOGENOM" id="CLU_108412_0_0_9"/>
<dbReference type="OrthoDB" id="9807461at2"/>
<dbReference type="GO" id="GO:0005524">
    <property type="term" value="F:ATP binding"/>
    <property type="evidence" value="ECO:0007669"/>
    <property type="project" value="UniProtKB-KW"/>
</dbReference>
<dbReference type="GO" id="GO:0003677">
    <property type="term" value="F:DNA binding"/>
    <property type="evidence" value="ECO:0007669"/>
    <property type="project" value="UniProtKB-KW"/>
</dbReference>
<dbReference type="GO" id="GO:0008270">
    <property type="term" value="F:zinc ion binding"/>
    <property type="evidence" value="ECO:0007669"/>
    <property type="project" value="UniProtKB-UniRule"/>
</dbReference>
<dbReference type="GO" id="GO:0045892">
    <property type="term" value="P:negative regulation of DNA-templated transcription"/>
    <property type="evidence" value="ECO:0007669"/>
    <property type="project" value="UniProtKB-UniRule"/>
</dbReference>
<dbReference type="HAMAP" id="MF_00440">
    <property type="entry name" value="NrdR"/>
    <property type="match status" value="1"/>
</dbReference>
<dbReference type="InterPro" id="IPR005144">
    <property type="entry name" value="ATP-cone_dom"/>
</dbReference>
<dbReference type="InterPro" id="IPR055173">
    <property type="entry name" value="NrdR-like_N"/>
</dbReference>
<dbReference type="InterPro" id="IPR003796">
    <property type="entry name" value="RNR_NrdR-like"/>
</dbReference>
<dbReference type="NCBIfam" id="TIGR00244">
    <property type="entry name" value="transcriptional regulator NrdR"/>
    <property type="match status" value="1"/>
</dbReference>
<dbReference type="PANTHER" id="PTHR30455">
    <property type="entry name" value="TRANSCRIPTIONAL REPRESSOR NRDR"/>
    <property type="match status" value="1"/>
</dbReference>
<dbReference type="PANTHER" id="PTHR30455:SF2">
    <property type="entry name" value="TRANSCRIPTIONAL REPRESSOR NRDR"/>
    <property type="match status" value="1"/>
</dbReference>
<dbReference type="Pfam" id="PF03477">
    <property type="entry name" value="ATP-cone"/>
    <property type="match status" value="1"/>
</dbReference>
<dbReference type="Pfam" id="PF22811">
    <property type="entry name" value="Zn_ribbon_NrdR"/>
    <property type="match status" value="1"/>
</dbReference>
<dbReference type="PROSITE" id="PS51161">
    <property type="entry name" value="ATP_CONE"/>
    <property type="match status" value="1"/>
</dbReference>
<name>NRDR_GEOSW</name>
<accession>C5D643</accession>
<evidence type="ECO:0000255" key="1">
    <source>
        <dbReference type="HAMAP-Rule" id="MF_00440"/>
    </source>
</evidence>
<keyword id="KW-0067">ATP-binding</keyword>
<keyword id="KW-0238">DNA-binding</keyword>
<keyword id="KW-0479">Metal-binding</keyword>
<keyword id="KW-0547">Nucleotide-binding</keyword>
<keyword id="KW-0678">Repressor</keyword>
<keyword id="KW-0804">Transcription</keyword>
<keyword id="KW-0805">Transcription regulation</keyword>
<keyword id="KW-0862">Zinc</keyword>
<keyword id="KW-0863">Zinc-finger</keyword>
<gene>
    <name evidence="1" type="primary">nrdR</name>
    <name type="ordered locus">GWCH70_2665</name>
</gene>